<reference key="1">
    <citation type="journal article" date="2009" name="PLoS Biol.">
        <title>Lineage-specific biology revealed by a finished genome assembly of the mouse.</title>
        <authorList>
            <person name="Church D.M."/>
            <person name="Goodstadt L."/>
            <person name="Hillier L.W."/>
            <person name="Zody M.C."/>
            <person name="Goldstein S."/>
            <person name="She X."/>
            <person name="Bult C.J."/>
            <person name="Agarwala R."/>
            <person name="Cherry J.L."/>
            <person name="DiCuccio M."/>
            <person name="Hlavina W."/>
            <person name="Kapustin Y."/>
            <person name="Meric P."/>
            <person name="Maglott D."/>
            <person name="Birtle Z."/>
            <person name="Marques A.C."/>
            <person name="Graves T."/>
            <person name="Zhou S."/>
            <person name="Teague B."/>
            <person name="Potamousis K."/>
            <person name="Churas C."/>
            <person name="Place M."/>
            <person name="Herschleb J."/>
            <person name="Runnheim R."/>
            <person name="Forrest D."/>
            <person name="Amos-Landgraf J."/>
            <person name="Schwartz D.C."/>
            <person name="Cheng Z."/>
            <person name="Lindblad-Toh K."/>
            <person name="Eichler E.E."/>
            <person name="Ponting C.P."/>
        </authorList>
    </citation>
    <scope>NUCLEOTIDE SEQUENCE [LARGE SCALE GENOMIC DNA]</scope>
    <source>
        <strain>C57BL/6J</strain>
    </source>
</reference>
<reference key="2">
    <citation type="journal article" date="2004" name="Eur. J. Cell Biol.">
        <title>Comprehensive analysis of keratin gene clusters in humans and rodents.</title>
        <authorList>
            <person name="Hesse M."/>
            <person name="Zimek A."/>
            <person name="Weber K."/>
            <person name="Magin T.M."/>
        </authorList>
    </citation>
    <scope>IDENTIFICATION</scope>
</reference>
<dbReference type="EMBL" id="AC104862">
    <property type="status" value="NOT_ANNOTATED_CDS"/>
    <property type="molecule type" value="Genomic_DNA"/>
</dbReference>
<dbReference type="EMBL" id="BK001584">
    <property type="protein sequence ID" value="DAA02059.1"/>
    <property type="molecule type" value="mRNA"/>
</dbReference>
<dbReference type="CCDS" id="CCDS27863.1"/>
<dbReference type="RefSeq" id="NP_998893.1">
    <property type="nucleotide sequence ID" value="NM_213728.2"/>
</dbReference>
<dbReference type="SMR" id="Q6IME9"/>
<dbReference type="BioGRID" id="222940">
    <property type="interactions" value="5"/>
</dbReference>
<dbReference type="FunCoup" id="Q6IME9">
    <property type="interactions" value="35"/>
</dbReference>
<dbReference type="IntAct" id="Q6IME9">
    <property type="interactions" value="1"/>
</dbReference>
<dbReference type="STRING" id="10090.ENSMUSP00000065922"/>
<dbReference type="GlyGen" id="Q6IME9">
    <property type="glycosylation" value="1 site"/>
</dbReference>
<dbReference type="iPTMnet" id="Q6IME9"/>
<dbReference type="PhosphoSitePlus" id="Q6IME9"/>
<dbReference type="jPOST" id="Q6IME9"/>
<dbReference type="PaxDb" id="10090-ENSMUSP00000065922"/>
<dbReference type="PeptideAtlas" id="Q6IME9"/>
<dbReference type="ProteomicsDB" id="269170"/>
<dbReference type="Antibodypedia" id="55991">
    <property type="antibodies" value="115 antibodies from 20 providers"/>
</dbReference>
<dbReference type="DNASU" id="105866"/>
<dbReference type="Ensembl" id="ENSMUST00000071104.6">
    <property type="protein sequence ID" value="ENSMUSP00000065922.5"/>
    <property type="gene ID" value="ENSMUSG00000056605.8"/>
</dbReference>
<dbReference type="GeneID" id="105866"/>
<dbReference type="KEGG" id="mmu:105866"/>
<dbReference type="UCSC" id="uc007xtz.1">
    <property type="organism name" value="mouse"/>
</dbReference>
<dbReference type="AGR" id="MGI:2146034"/>
<dbReference type="CTD" id="140807"/>
<dbReference type="MGI" id="MGI:2146034">
    <property type="gene designation" value="Krt72"/>
</dbReference>
<dbReference type="VEuPathDB" id="HostDB:ENSMUSG00000056605"/>
<dbReference type="eggNOG" id="ENOG502T3SC">
    <property type="taxonomic scope" value="Eukaryota"/>
</dbReference>
<dbReference type="GeneTree" id="ENSGT00940000162105"/>
<dbReference type="HOGENOM" id="CLU_012560_6_1_1"/>
<dbReference type="InParanoid" id="Q6IME9"/>
<dbReference type="OMA" id="CKKRYEV"/>
<dbReference type="OrthoDB" id="2441647at2759"/>
<dbReference type="PhylomeDB" id="Q6IME9"/>
<dbReference type="TreeFam" id="TF317854"/>
<dbReference type="Reactome" id="R-MMU-6805567">
    <property type="pathway name" value="Keratinization"/>
</dbReference>
<dbReference type="Reactome" id="R-MMU-6809371">
    <property type="pathway name" value="Formation of the cornified envelope"/>
</dbReference>
<dbReference type="BioGRID-ORCS" id="105866">
    <property type="hits" value="3 hits in 75 CRISPR screens"/>
</dbReference>
<dbReference type="PRO" id="PR:Q6IME9"/>
<dbReference type="Proteomes" id="UP000000589">
    <property type="component" value="Chromosome 15"/>
</dbReference>
<dbReference type="RNAct" id="Q6IME9">
    <property type="molecule type" value="protein"/>
</dbReference>
<dbReference type="Bgee" id="ENSMUSG00000056605">
    <property type="expression patterns" value="Expressed in lip and 20 other cell types or tissues"/>
</dbReference>
<dbReference type="GO" id="GO:0045095">
    <property type="term" value="C:keratin filament"/>
    <property type="evidence" value="ECO:0007669"/>
    <property type="project" value="InterPro"/>
</dbReference>
<dbReference type="FunFam" id="1.20.5.1160:FF:000001">
    <property type="entry name" value="Keratin type II"/>
    <property type="match status" value="1"/>
</dbReference>
<dbReference type="FunFam" id="1.20.5.170:FF:000004">
    <property type="entry name" value="Keratin, type II cytoskeletal 5"/>
    <property type="match status" value="1"/>
</dbReference>
<dbReference type="FunFam" id="1.20.5.500:FF:000001">
    <property type="entry name" value="Type II keratin 23"/>
    <property type="match status" value="1"/>
</dbReference>
<dbReference type="Gene3D" id="1.20.5.170">
    <property type="match status" value="1"/>
</dbReference>
<dbReference type="Gene3D" id="1.20.5.500">
    <property type="entry name" value="Single helix bin"/>
    <property type="match status" value="1"/>
</dbReference>
<dbReference type="Gene3D" id="1.20.5.1160">
    <property type="entry name" value="Vasodilator-stimulated phosphoprotein"/>
    <property type="match status" value="1"/>
</dbReference>
<dbReference type="InterPro" id="IPR018039">
    <property type="entry name" value="IF_conserved"/>
</dbReference>
<dbReference type="InterPro" id="IPR039008">
    <property type="entry name" value="IF_rod_dom"/>
</dbReference>
<dbReference type="InterPro" id="IPR032444">
    <property type="entry name" value="Keratin_2_head"/>
</dbReference>
<dbReference type="InterPro" id="IPR003054">
    <property type="entry name" value="Keratin_II"/>
</dbReference>
<dbReference type="PANTHER" id="PTHR45616">
    <property type="entry name" value="GATA-TYPE DOMAIN-CONTAINING PROTEIN"/>
    <property type="match status" value="1"/>
</dbReference>
<dbReference type="PANTHER" id="PTHR45616:SF2">
    <property type="entry name" value="KERATIN, TYPE II CYTOSKELETAL 72"/>
    <property type="match status" value="1"/>
</dbReference>
<dbReference type="Pfam" id="PF00038">
    <property type="entry name" value="Filament"/>
    <property type="match status" value="1"/>
</dbReference>
<dbReference type="Pfam" id="PF16208">
    <property type="entry name" value="Keratin_2_head"/>
    <property type="match status" value="1"/>
</dbReference>
<dbReference type="PRINTS" id="PR01276">
    <property type="entry name" value="TYPE2KERATIN"/>
</dbReference>
<dbReference type="SMART" id="SM01391">
    <property type="entry name" value="Filament"/>
    <property type="match status" value="1"/>
</dbReference>
<dbReference type="SUPFAM" id="SSF64593">
    <property type="entry name" value="Intermediate filament protein, coiled coil region"/>
    <property type="match status" value="3"/>
</dbReference>
<dbReference type="PROSITE" id="PS00226">
    <property type="entry name" value="IF_ROD_1"/>
    <property type="match status" value="1"/>
</dbReference>
<dbReference type="PROSITE" id="PS51842">
    <property type="entry name" value="IF_ROD_2"/>
    <property type="match status" value="1"/>
</dbReference>
<comment type="function">
    <text evidence="1">Has a role in hair formation. Specific component of keratin intermediate filaments in the inner root sheath (IRS) of the hair follicle (By similarity).</text>
</comment>
<comment type="subunit">
    <text>Heterotetramer of two type I and two type II keratins.</text>
</comment>
<comment type="miscellaneous">
    <text>There are two types of cytoskeletal and microfibrillar keratin, I (acidic) and II (neutral to basic) (40-55 and 56-70 kDa, respectively).</text>
</comment>
<comment type="similarity">
    <text evidence="2">Belongs to the intermediate filament family.</text>
</comment>
<sequence>MSRQLTLYPGAERLGFSGCSAVISGRLSGSHASVRAGVKGAAFGSRSLFCVGGGRRLALSSAGRSGGFTLGHGGASGGRPGGFVGTVFGSAGLGPTCPSVCPPGGIPQVVVNKSLLAPLNVELDPEIQKVRAQEREQIKALNNKFASFIDKVRFLEQQNQVLETKWELLQQLDLNNSKRSLEPVHESYISNLQKQLEILSGDRVRLDSELRNMREVVEDCKKRYEVEINRRTAAENEFVVLKKDVDAAYMNKVELQAKVDSLTDDIKFFKVLFEGEIAQMQSHISDTSVILSMDNNRQLDLDSILAEVRAQYEEIAVKSKAETENMYQCKIQELQATAGQHGDDLKHTKSEITEINRLIQRIHSEIGNMKKQCSNLETAIADAEQRGDCALKDARAKLDQLEGALQQAKEELARMLREHQELMNVKLALDMEIATYRKLLESEESRMAGEYPNSVSISVISSTNAGPGGAGFSVGFGASSSYNYRPLALEVKTKGSCGSELKDPPAKTSGSSGTTKKTSR</sequence>
<keyword id="KW-0175">Coiled coil</keyword>
<keyword id="KW-0403">Intermediate filament</keyword>
<keyword id="KW-0416">Keratin</keyword>
<keyword id="KW-1185">Reference proteome</keyword>
<name>K2C72_MOUSE</name>
<proteinExistence type="inferred from homology"/>
<protein>
    <recommendedName>
        <fullName>Keratin, type II cytoskeletal 72</fullName>
    </recommendedName>
    <alternativeName>
        <fullName>Cytokeratin-72</fullName>
        <shortName>CK-72</shortName>
    </alternativeName>
    <alternativeName>
        <fullName>Keratin-72</fullName>
        <shortName>K72</shortName>
    </alternativeName>
    <alternativeName>
        <fullName>Type II inner root sheath-specific keratin-K6irs2</fullName>
    </alternativeName>
    <alternativeName>
        <fullName>Type-II keratin Kb35</fullName>
    </alternativeName>
</protein>
<organism>
    <name type="scientific">Mus musculus</name>
    <name type="common">Mouse</name>
    <dbReference type="NCBI Taxonomy" id="10090"/>
    <lineage>
        <taxon>Eukaryota</taxon>
        <taxon>Metazoa</taxon>
        <taxon>Chordata</taxon>
        <taxon>Craniata</taxon>
        <taxon>Vertebrata</taxon>
        <taxon>Euteleostomi</taxon>
        <taxon>Mammalia</taxon>
        <taxon>Eutheria</taxon>
        <taxon>Euarchontoglires</taxon>
        <taxon>Glires</taxon>
        <taxon>Rodentia</taxon>
        <taxon>Myomorpha</taxon>
        <taxon>Muroidea</taxon>
        <taxon>Muridae</taxon>
        <taxon>Murinae</taxon>
        <taxon>Mus</taxon>
        <taxon>Mus</taxon>
    </lineage>
</organism>
<accession>Q6IME9</accession>
<evidence type="ECO:0000250" key="1"/>
<evidence type="ECO:0000255" key="2">
    <source>
        <dbReference type="PROSITE-ProRule" id="PRU01188"/>
    </source>
</evidence>
<evidence type="ECO:0000256" key="3">
    <source>
        <dbReference type="SAM" id="MobiDB-lite"/>
    </source>
</evidence>
<gene>
    <name type="primary">Krt72</name>
    <name type="synonym">Kb35</name>
    <name type="synonym">Krt72-ps</name>
</gene>
<feature type="chain" id="PRO_0000314878" description="Keratin, type II cytoskeletal 72">
    <location>
        <begin position="1"/>
        <end position="520"/>
    </location>
</feature>
<feature type="domain" description="IF rod" evidence="2">
    <location>
        <begin position="134"/>
        <end position="447"/>
    </location>
</feature>
<feature type="region of interest" description="Head">
    <location>
        <begin position="1"/>
        <end position="133"/>
    </location>
</feature>
<feature type="region of interest" description="Coil 1A">
    <location>
        <begin position="134"/>
        <end position="169"/>
    </location>
</feature>
<feature type="region of interest" description="Linker 1">
    <location>
        <begin position="170"/>
        <end position="188"/>
    </location>
</feature>
<feature type="region of interest" description="Coil 1B">
    <location>
        <begin position="189"/>
        <end position="280"/>
    </location>
</feature>
<feature type="region of interest" description="Linker 12">
    <location>
        <begin position="281"/>
        <end position="304"/>
    </location>
</feature>
<feature type="region of interest" description="Coil 2">
    <location>
        <begin position="305"/>
        <end position="443"/>
    </location>
</feature>
<feature type="region of interest" description="Tail">
    <location>
        <begin position="444"/>
        <end position="520"/>
    </location>
</feature>
<feature type="region of interest" description="Disordered" evidence="3">
    <location>
        <begin position="494"/>
        <end position="520"/>
    </location>
</feature>
<feature type="compositionally biased region" description="Low complexity" evidence="3">
    <location>
        <begin position="507"/>
        <end position="520"/>
    </location>
</feature>
<feature type="site" description="Stutter">
    <location>
        <position position="385"/>
    </location>
</feature>